<feature type="initiator methionine" description="Removed" evidence="3">
    <location>
        <position position="1"/>
    </location>
</feature>
<feature type="chain" id="PRO_0000200464" description="Cytochrome b559 subunit beta">
    <location>
        <begin position="2"/>
        <end position="39"/>
    </location>
</feature>
<feature type="transmembrane region" description="Helical" evidence="2">
    <location>
        <begin position="14"/>
        <end position="30"/>
    </location>
</feature>
<feature type="binding site" description="axial binding residue" evidence="2">
    <location>
        <position position="18"/>
    </location>
    <ligand>
        <name>heme</name>
        <dbReference type="ChEBI" id="CHEBI:30413"/>
        <note>ligand shared with alpha subunit</note>
    </ligand>
    <ligandPart>
        <name>Fe</name>
        <dbReference type="ChEBI" id="CHEBI:18248"/>
    </ligandPart>
</feature>
<name>PSBF_WHEAT</name>
<evidence type="ECO:0000250" key="1"/>
<evidence type="ECO:0000255" key="2">
    <source>
        <dbReference type="HAMAP-Rule" id="MF_00643"/>
    </source>
</evidence>
<evidence type="ECO:0000269" key="3">
    <source>
    </source>
</evidence>
<protein>
    <recommendedName>
        <fullName evidence="2">Cytochrome b559 subunit beta</fullName>
    </recommendedName>
    <alternativeName>
        <fullName evidence="2">PSII reaction center subunit VI</fullName>
    </alternativeName>
</protein>
<dbReference type="EMBL" id="X03776">
    <property type="protein sequence ID" value="CAA27406.1"/>
    <property type="molecule type" value="Genomic_DNA"/>
</dbReference>
<dbReference type="EMBL" id="X15225">
    <property type="protein sequence ID" value="CAA33295.1"/>
    <property type="molecule type" value="Genomic_DNA"/>
</dbReference>
<dbReference type="EMBL" id="AB042240">
    <property type="protein sequence ID" value="BAB47049.1"/>
    <property type="status" value="ALT_SEQ"/>
    <property type="molecule type" value="Genomic_DNA"/>
</dbReference>
<dbReference type="PIR" id="B26015">
    <property type="entry name" value="F2KT5F"/>
</dbReference>
<dbReference type="RefSeq" id="NP_114274.1">
    <property type="nucleotide sequence ID" value="NC_002762.1"/>
</dbReference>
<dbReference type="SMR" id="P60125"/>
<dbReference type="STRING" id="4565.P60125"/>
<dbReference type="PaxDb" id="4565-EPlTAEP00000010029"/>
<dbReference type="EnsemblPlants" id="TraesARI1A03G00074300.1">
    <property type="protein sequence ID" value="TraesARI1A03G00074300.1.CDS1"/>
    <property type="gene ID" value="TraesARI1A03G00074300"/>
</dbReference>
<dbReference type="EnsemblPlants" id="TraesARI1D03G00531670.1">
    <property type="protein sequence ID" value="TraesARI1D03G00531670.1.CDS1"/>
    <property type="gene ID" value="TraesARI1D03G00531670"/>
</dbReference>
<dbReference type="EnsemblPlants" id="TraesCAD_scaffold_023365_01G000200.1">
    <property type="protein sequence ID" value="TraesCAD_scaffold_023365_01G000200.1"/>
    <property type="gene ID" value="TraesCAD_scaffold_023365_01G000200"/>
</dbReference>
<dbReference type="EnsemblPlants" id="TraesCLE_scaffold_024075_01G000100.1">
    <property type="protein sequence ID" value="TraesCLE_scaffold_024075_01G000100.1"/>
    <property type="gene ID" value="TraesCLE_scaffold_024075_01G000100"/>
</dbReference>
<dbReference type="EnsemblPlants" id="TraesCLE_scaffold_477845_01G000100.1">
    <property type="protein sequence ID" value="TraesCLE_scaffold_477845_01G000100.1"/>
    <property type="gene ID" value="TraesCLE_scaffold_477845_01G000100"/>
</dbReference>
<dbReference type="EnsemblPlants" id="TraesCS1A02G148600.1">
    <property type="protein sequence ID" value="TraesCS1A02G148600.1.cds1"/>
    <property type="gene ID" value="TraesCS1A02G148600"/>
</dbReference>
<dbReference type="EnsemblPlants" id="TraesCS1A03G0401000.1">
    <property type="protein sequence ID" value="TraesCS1A03G0401000.1.CDS1"/>
    <property type="gene ID" value="TraesCS1A03G0401000"/>
</dbReference>
<dbReference type="EnsemblPlants" id="TraesCS1A03G0401100.1">
    <property type="protein sequence ID" value="TraesCS1A03G0401100.1.CDS1"/>
    <property type="gene ID" value="TraesCS1A03G0401100"/>
</dbReference>
<dbReference type="EnsemblPlants" id="TraesCS1D02G295300.1">
    <property type="protein sequence ID" value="TraesCS1D02G295300.1.cds1"/>
    <property type="gene ID" value="TraesCS1D02G295300"/>
</dbReference>
<dbReference type="EnsemblPlants" id="TraesCS1D03G0706500.1">
    <property type="protein sequence ID" value="TraesCS1D03G0706500.1.CDS1"/>
    <property type="gene ID" value="TraesCS1D03G0706500"/>
</dbReference>
<dbReference type="EnsemblPlants" id="TraesCS2B02G262300.1">
    <property type="protein sequence ID" value="TraesCS2B02G262300.1.cds1"/>
    <property type="gene ID" value="TraesCS2B02G262300"/>
</dbReference>
<dbReference type="EnsemblPlants" id="TraesCS2B03G0668400.1">
    <property type="protein sequence ID" value="TraesCS2B03G0668400.1.CDS1"/>
    <property type="gene ID" value="TraesCS2B03G0668400"/>
</dbReference>
<dbReference type="EnsemblPlants" id="TraesCS6D02G325700.1">
    <property type="protein sequence ID" value="TraesCS6D02G325700.1.cds1"/>
    <property type="gene ID" value="TraesCS6D02G325700"/>
</dbReference>
<dbReference type="EnsemblPlants" id="TraesCS6D03G0762400.1">
    <property type="protein sequence ID" value="TraesCS6D03G0762400.1.CDS1"/>
    <property type="gene ID" value="TraesCS6D03G0762400"/>
</dbReference>
<dbReference type="EnsemblPlants" id="TraesCSU02G259200.1">
    <property type="protein sequence ID" value="TraesCSU02G259200.1.cds1"/>
    <property type="gene ID" value="TraesCSU02G259200"/>
</dbReference>
<dbReference type="EnsemblPlants" id="TraesJAG1A03G00072640.1">
    <property type="protein sequence ID" value="TraesJAG1A03G00072640.1.CDS1"/>
    <property type="gene ID" value="TraesJAG1A03G00072640"/>
</dbReference>
<dbReference type="EnsemblPlants" id="TraesJAG1D03G00525360.1">
    <property type="protein sequence ID" value="TraesJAG1D03G00525360.1.CDS1"/>
    <property type="gene ID" value="TraesJAG1D03G00525360"/>
</dbReference>
<dbReference type="EnsemblPlants" id="TraesJAG1D03G00525380.1">
    <property type="protein sequence ID" value="TraesJAG1D03G00525380.1.CDS1"/>
    <property type="gene ID" value="TraesJAG1D03G00525380"/>
</dbReference>
<dbReference type="EnsemblPlants" id="TraesJUL1A03G00072080.1">
    <property type="protein sequence ID" value="TraesJUL1A03G00072080.1.CDS1"/>
    <property type="gene ID" value="TraesJUL1A03G00072080"/>
</dbReference>
<dbReference type="EnsemblPlants" id="TraesLAC1A03G00074960.1">
    <property type="protein sequence ID" value="TraesLAC1A03G00074960.1.CDS1"/>
    <property type="gene ID" value="TraesLAC1A03G00074960"/>
</dbReference>
<dbReference type="EnsemblPlants" id="TraesLDM1A03G00072410.1">
    <property type="protein sequence ID" value="TraesLDM1A03G00072410.1.CDS1"/>
    <property type="gene ID" value="TraesLDM1A03G00072410"/>
</dbReference>
<dbReference type="EnsemblPlants" id="TraesLDM1D03G00528270.1">
    <property type="protein sequence ID" value="TraesLDM1D03G00528270.1.CDS1"/>
    <property type="gene ID" value="TraesLDM1D03G00528270"/>
</dbReference>
<dbReference type="EnsemblPlants" id="TraesMAC1A03G00073850.1">
    <property type="protein sequence ID" value="TraesMAC1A03G00073850.1.CDS1"/>
    <property type="gene ID" value="TraesMAC1A03G00073850"/>
</dbReference>
<dbReference type="EnsemblPlants" id="TraesNOR1A03G00072240.1">
    <property type="protein sequence ID" value="TraesNOR1A03G00072240.1.CDS1"/>
    <property type="gene ID" value="TraesNOR1A03G00072240"/>
</dbReference>
<dbReference type="EnsemblPlants" id="TraesPARA_EIv1.0_0063840.1">
    <property type="protein sequence ID" value="TraesPARA_EIv1.0_0063840.1.CDS1"/>
    <property type="gene ID" value="TraesPARA_EIv1.0_0063840"/>
</dbReference>
<dbReference type="EnsemblPlants" id="TraesPARA_EIv1.0_0296440.1">
    <property type="protein sequence ID" value="TraesPARA_EIv1.0_0296440.1.CDS1"/>
    <property type="gene ID" value="TraesPARA_EIv1.0_0296440"/>
</dbReference>
<dbReference type="EnsemblPlants" id="TraesPARA_EIv1.0_0554380.1">
    <property type="protein sequence ID" value="TraesPARA_EIv1.0_0554380.1.CDS1"/>
    <property type="gene ID" value="TraesPARA_EIv1.0_0554380"/>
</dbReference>
<dbReference type="EnsemblPlants" id="TraesPARA_EIv1.0_0757190.1">
    <property type="protein sequence ID" value="TraesPARA_EIv1.0_0757190.1.CDS1"/>
    <property type="gene ID" value="TraesPARA_EIv1.0_0757190"/>
</dbReference>
<dbReference type="EnsemblPlants" id="TraesPARA_EIv1.0_0758300.1">
    <property type="protein sequence ID" value="TraesPARA_EIv1.0_0758300.1.CDS1"/>
    <property type="gene ID" value="TraesPARA_EIv1.0_0758300"/>
</dbReference>
<dbReference type="EnsemblPlants" id="TraesPARA_EIv1.0_1062630.1">
    <property type="protein sequence ID" value="TraesPARA_EIv1.0_1062630.1.CDS1"/>
    <property type="gene ID" value="TraesPARA_EIv1.0_1062630"/>
</dbReference>
<dbReference type="EnsemblPlants" id="TraesPARA_EIv1.0_2055560.1">
    <property type="protein sequence ID" value="TraesPARA_EIv1.0_2055560.1.CDS1"/>
    <property type="gene ID" value="TraesPARA_EIv1.0_2055560"/>
</dbReference>
<dbReference type="EnsemblPlants" id="TraesPARA_EIv1.0_2645380.1">
    <property type="protein sequence ID" value="TraesPARA_EIv1.0_2645380.1.CDS1"/>
    <property type="gene ID" value="TraesPARA_EIv1.0_2645380"/>
</dbReference>
<dbReference type="EnsemblPlants" id="TraesPARA_EIv1.0_2647110.1">
    <property type="protein sequence ID" value="TraesPARA_EIv1.0_2647110.1.CDS1"/>
    <property type="gene ID" value="TraesPARA_EIv1.0_2647110"/>
</dbReference>
<dbReference type="EnsemblPlants" id="TraesPARA_EIv1.0_2682080.1">
    <property type="protein sequence ID" value="TraesPARA_EIv1.0_2682080.1.CDS1"/>
    <property type="gene ID" value="TraesPARA_EIv1.0_2682080"/>
</dbReference>
<dbReference type="EnsemblPlants" id="TraesRN1A0100990600.1">
    <property type="protein sequence ID" value="TraesRN1A0100990600.1"/>
    <property type="gene ID" value="TraesRN1A0100990600"/>
</dbReference>
<dbReference type="EnsemblPlants" id="TraesRN1D0100466300.1">
    <property type="protein sequence ID" value="TraesRN1D0100466300.1"/>
    <property type="gene ID" value="TraesRN1D0100466300"/>
</dbReference>
<dbReference type="EnsemblPlants" id="TraesRN1D0100466800.1">
    <property type="protein sequence ID" value="TraesRN1D0100466800.1"/>
    <property type="gene ID" value="TraesRN1D0100466800"/>
</dbReference>
<dbReference type="EnsemblPlants" id="TraesRN1D0100750400.1">
    <property type="protein sequence ID" value="TraesRN1D0100750400.1"/>
    <property type="gene ID" value="TraesRN1D0100750400"/>
</dbReference>
<dbReference type="EnsemblPlants" id="TraesRN2A0100534000.1">
    <property type="protein sequence ID" value="TraesRN2A0100534000.1"/>
    <property type="gene ID" value="TraesRN2A0100534000"/>
</dbReference>
<dbReference type="EnsemblPlants" id="TraesRN2B0100681900.1">
    <property type="protein sequence ID" value="TraesRN2B0100681900.1"/>
    <property type="gene ID" value="TraesRN2B0100681900"/>
</dbReference>
<dbReference type="EnsemblPlants" id="TraesRN2D0100666400.1">
    <property type="protein sequence ID" value="TraesRN2D0100666400.1"/>
    <property type="gene ID" value="TraesRN2D0100666400"/>
</dbReference>
<dbReference type="EnsemblPlants" id="TraesRN3B0100437300.1">
    <property type="protein sequence ID" value="TraesRN3B0100437300.1"/>
    <property type="gene ID" value="TraesRN3B0100437300"/>
</dbReference>
<dbReference type="EnsemblPlants" id="TraesRN5A0101242500.1">
    <property type="protein sequence ID" value="TraesRN5A0101242500.1"/>
    <property type="gene ID" value="TraesRN5A0101242500"/>
</dbReference>
<dbReference type="EnsemblPlants" id="TraesRN5D0100537800.1">
    <property type="protein sequence ID" value="TraesRN5D0100537800.1"/>
    <property type="gene ID" value="TraesRN5D0100537800"/>
</dbReference>
<dbReference type="EnsemblPlants" id="TraesRN6D0100806700.1">
    <property type="protein sequence ID" value="TraesRN6D0100806700.1"/>
    <property type="gene ID" value="TraesRN6D0100806700"/>
</dbReference>
<dbReference type="EnsemblPlants" id="TraesROB_scaffold_035582_01G000200.1">
    <property type="protein sequence ID" value="TraesROB_scaffold_035582_01G000200.1"/>
    <property type="gene ID" value="TraesROB_scaffold_035582_01G000200"/>
</dbReference>
<dbReference type="EnsemblPlants" id="TraesROB_scaffold_048710_01G000100.1">
    <property type="protein sequence ID" value="TraesROB_scaffold_048710_01G000100.1"/>
    <property type="gene ID" value="TraesROB_scaffold_048710_01G000100"/>
</dbReference>
<dbReference type="EnsemblPlants" id="TraesROB_scaffold_460319_01G000100.1">
    <property type="protein sequence ID" value="TraesROB_scaffold_460319_01G000100.1"/>
    <property type="gene ID" value="TraesROB_scaffold_460319_01G000100"/>
</dbReference>
<dbReference type="EnsemblPlants" id="TraesROB_scaffold_725978_01G000100.1">
    <property type="protein sequence ID" value="TraesROB_scaffold_725978_01G000100.1"/>
    <property type="gene ID" value="TraesROB_scaffold_725978_01G000100"/>
</dbReference>
<dbReference type="EnsemblPlants" id="TraesSTA1A03G00072920.1">
    <property type="protein sequence ID" value="TraesSTA1A03G00072920.1.CDS1"/>
    <property type="gene ID" value="TraesSTA1A03G00072920"/>
</dbReference>
<dbReference type="EnsemblPlants" id="TraesSTA1D03G00524570.1">
    <property type="protein sequence ID" value="TraesSTA1D03G00524570.1.CDS1"/>
    <property type="gene ID" value="TraesSTA1D03G00524570"/>
</dbReference>
<dbReference type="EnsemblPlants" id="TraesSYM1A03G00075310.1">
    <property type="protein sequence ID" value="TraesSYM1A03G00075310.1.CDS1"/>
    <property type="gene ID" value="TraesSYM1A03G00075310"/>
</dbReference>
<dbReference type="EnsemblPlants" id="TraesWEE_scaffold_019503_01G000100.1">
    <property type="protein sequence ID" value="TraesWEE_scaffold_019503_01G000100.1"/>
    <property type="gene ID" value="TraesWEE_scaffold_019503_01G000100"/>
</dbReference>
<dbReference type="EnsemblPlants" id="TraesWEE_scaffold_036006_01G000200.1">
    <property type="protein sequence ID" value="TraesWEE_scaffold_036006_01G000200.1"/>
    <property type="gene ID" value="TraesWEE_scaffold_036006_01G000200"/>
</dbReference>
<dbReference type="EnsemblPlants" id="TraesWEE_scaffold_294409_01G000300.1">
    <property type="protein sequence ID" value="TraesWEE_scaffold_294409_01G000300.1"/>
    <property type="gene ID" value="TraesWEE_scaffold_294409_01G000300"/>
</dbReference>
<dbReference type="GeneID" id="803192"/>
<dbReference type="Gramene" id="TraesARI1A03G00074300.1">
    <property type="protein sequence ID" value="TraesARI1A03G00074300.1.CDS1"/>
    <property type="gene ID" value="TraesARI1A03G00074300"/>
</dbReference>
<dbReference type="Gramene" id="TraesARI1D03G00531670.1">
    <property type="protein sequence ID" value="TraesARI1D03G00531670.1.CDS1"/>
    <property type="gene ID" value="TraesARI1D03G00531670"/>
</dbReference>
<dbReference type="Gramene" id="TraesCAD_scaffold_023365_01G000200.1">
    <property type="protein sequence ID" value="TraesCAD_scaffold_023365_01G000200.1"/>
    <property type="gene ID" value="TraesCAD_scaffold_023365_01G000200"/>
</dbReference>
<dbReference type="Gramene" id="TraesCLE_scaffold_024075_01G000100.1">
    <property type="protein sequence ID" value="TraesCLE_scaffold_024075_01G000100.1"/>
    <property type="gene ID" value="TraesCLE_scaffold_024075_01G000100"/>
</dbReference>
<dbReference type="Gramene" id="TraesCLE_scaffold_477845_01G000100.1">
    <property type="protein sequence ID" value="TraesCLE_scaffold_477845_01G000100.1"/>
    <property type="gene ID" value="TraesCLE_scaffold_477845_01G000100"/>
</dbReference>
<dbReference type="Gramene" id="TraesCS1A02G148600.1">
    <property type="protein sequence ID" value="TraesCS1A02G148600.1.cds1"/>
    <property type="gene ID" value="TraesCS1A02G148600"/>
</dbReference>
<dbReference type="Gramene" id="TraesCS1A03G0401000.1">
    <property type="protein sequence ID" value="TraesCS1A03G0401000.1.CDS1"/>
    <property type="gene ID" value="TraesCS1A03G0401000"/>
</dbReference>
<dbReference type="Gramene" id="TraesCS1A03G0401100.1">
    <property type="protein sequence ID" value="TraesCS1A03G0401100.1.CDS1"/>
    <property type="gene ID" value="TraesCS1A03G0401100"/>
</dbReference>
<dbReference type="Gramene" id="TraesCS1D02G295300.1">
    <property type="protein sequence ID" value="TraesCS1D02G295300.1.cds1"/>
    <property type="gene ID" value="TraesCS1D02G295300"/>
</dbReference>
<dbReference type="Gramene" id="TraesCS1D03G0706500.1">
    <property type="protein sequence ID" value="TraesCS1D03G0706500.1.CDS1"/>
    <property type="gene ID" value="TraesCS1D03G0706500"/>
</dbReference>
<dbReference type="Gramene" id="TraesCS2B02G262300.1">
    <property type="protein sequence ID" value="TraesCS2B02G262300.1.cds1"/>
    <property type="gene ID" value="TraesCS2B02G262300"/>
</dbReference>
<dbReference type="Gramene" id="TraesCS2B03G0668400.1">
    <property type="protein sequence ID" value="TraesCS2B03G0668400.1.CDS1"/>
    <property type="gene ID" value="TraesCS2B03G0668400"/>
</dbReference>
<dbReference type="Gramene" id="TraesCS6D02G325700.1">
    <property type="protein sequence ID" value="TraesCS6D02G325700.1.cds1"/>
    <property type="gene ID" value="TraesCS6D02G325700"/>
</dbReference>
<dbReference type="Gramene" id="TraesCS6D03G0762400.1">
    <property type="protein sequence ID" value="TraesCS6D03G0762400.1.CDS1"/>
    <property type="gene ID" value="TraesCS6D03G0762400"/>
</dbReference>
<dbReference type="Gramene" id="TraesCSU02G259200.1">
    <property type="protein sequence ID" value="TraesCSU02G259200.1.cds1"/>
    <property type="gene ID" value="TraesCSU02G259200"/>
</dbReference>
<dbReference type="Gramene" id="TraesJAG1A03G00072640.1">
    <property type="protein sequence ID" value="TraesJAG1A03G00072640.1.CDS1"/>
    <property type="gene ID" value="TraesJAG1A03G00072640"/>
</dbReference>
<dbReference type="Gramene" id="TraesJAG1D03G00525360.1">
    <property type="protein sequence ID" value="TraesJAG1D03G00525360.1.CDS1"/>
    <property type="gene ID" value="TraesJAG1D03G00525360"/>
</dbReference>
<dbReference type="Gramene" id="TraesJAG1D03G00525380.1">
    <property type="protein sequence ID" value="TraesJAG1D03G00525380.1.CDS1"/>
    <property type="gene ID" value="TraesJAG1D03G00525380"/>
</dbReference>
<dbReference type="Gramene" id="TraesJUL1A03G00072080.1">
    <property type="protein sequence ID" value="TraesJUL1A03G00072080.1.CDS1"/>
    <property type="gene ID" value="TraesJUL1A03G00072080"/>
</dbReference>
<dbReference type="Gramene" id="TraesLAC1A03G00074960.1">
    <property type="protein sequence ID" value="TraesLAC1A03G00074960.1.CDS1"/>
    <property type="gene ID" value="TraesLAC1A03G00074960"/>
</dbReference>
<dbReference type="Gramene" id="TraesLDM1A03G00072410.1">
    <property type="protein sequence ID" value="TraesLDM1A03G00072410.1.CDS1"/>
    <property type="gene ID" value="TraesLDM1A03G00072410"/>
</dbReference>
<dbReference type="Gramene" id="TraesLDM1D03G00528270.1">
    <property type="protein sequence ID" value="TraesLDM1D03G00528270.1.CDS1"/>
    <property type="gene ID" value="TraesLDM1D03G00528270"/>
</dbReference>
<dbReference type="Gramene" id="TraesMAC1A03G00073850.1">
    <property type="protein sequence ID" value="TraesMAC1A03G00073850.1.CDS1"/>
    <property type="gene ID" value="TraesMAC1A03G00073850"/>
</dbReference>
<dbReference type="Gramene" id="TraesNOR1A03G00072240.1">
    <property type="protein sequence ID" value="TraesNOR1A03G00072240.1.CDS1"/>
    <property type="gene ID" value="TraesNOR1A03G00072240"/>
</dbReference>
<dbReference type="Gramene" id="TraesPARA_EIv1.0_0063840.1">
    <property type="protein sequence ID" value="TraesPARA_EIv1.0_0063840.1.CDS1"/>
    <property type="gene ID" value="TraesPARA_EIv1.0_0063840"/>
</dbReference>
<dbReference type="Gramene" id="TraesPARA_EIv1.0_0296440.1">
    <property type="protein sequence ID" value="TraesPARA_EIv1.0_0296440.1.CDS1"/>
    <property type="gene ID" value="TraesPARA_EIv1.0_0296440"/>
</dbReference>
<dbReference type="Gramene" id="TraesPARA_EIv1.0_0554380.1">
    <property type="protein sequence ID" value="TraesPARA_EIv1.0_0554380.1.CDS1"/>
    <property type="gene ID" value="TraesPARA_EIv1.0_0554380"/>
</dbReference>
<dbReference type="Gramene" id="TraesPARA_EIv1.0_0757190.1">
    <property type="protein sequence ID" value="TraesPARA_EIv1.0_0757190.1.CDS1"/>
    <property type="gene ID" value="TraesPARA_EIv1.0_0757190"/>
</dbReference>
<dbReference type="Gramene" id="TraesPARA_EIv1.0_0758300.1">
    <property type="protein sequence ID" value="TraesPARA_EIv1.0_0758300.1.CDS1"/>
    <property type="gene ID" value="TraesPARA_EIv1.0_0758300"/>
</dbReference>
<dbReference type="Gramene" id="TraesPARA_EIv1.0_1062630.1">
    <property type="protein sequence ID" value="TraesPARA_EIv1.0_1062630.1.CDS1"/>
    <property type="gene ID" value="TraesPARA_EIv1.0_1062630"/>
</dbReference>
<dbReference type="Gramene" id="TraesPARA_EIv1.0_2055560.1">
    <property type="protein sequence ID" value="TraesPARA_EIv1.0_2055560.1.CDS1"/>
    <property type="gene ID" value="TraesPARA_EIv1.0_2055560"/>
</dbReference>
<dbReference type="Gramene" id="TraesPARA_EIv1.0_2645380.1">
    <property type="protein sequence ID" value="TraesPARA_EIv1.0_2645380.1.CDS1"/>
    <property type="gene ID" value="TraesPARA_EIv1.0_2645380"/>
</dbReference>
<dbReference type="Gramene" id="TraesPARA_EIv1.0_2647110.1">
    <property type="protein sequence ID" value="TraesPARA_EIv1.0_2647110.1.CDS1"/>
    <property type="gene ID" value="TraesPARA_EIv1.0_2647110"/>
</dbReference>
<dbReference type="Gramene" id="TraesPARA_EIv1.0_2682080.1">
    <property type="protein sequence ID" value="TraesPARA_EIv1.0_2682080.1.CDS1"/>
    <property type="gene ID" value="TraesPARA_EIv1.0_2682080"/>
</dbReference>
<dbReference type="Gramene" id="TraesRN1A0100990600.1">
    <property type="protein sequence ID" value="TraesRN1A0100990600.1"/>
    <property type="gene ID" value="TraesRN1A0100990600"/>
</dbReference>
<dbReference type="Gramene" id="TraesRN1D0100466300.1">
    <property type="protein sequence ID" value="TraesRN1D0100466300.1"/>
    <property type="gene ID" value="TraesRN1D0100466300"/>
</dbReference>
<dbReference type="Gramene" id="TraesRN1D0100466800.1">
    <property type="protein sequence ID" value="TraesRN1D0100466800.1"/>
    <property type="gene ID" value="TraesRN1D0100466800"/>
</dbReference>
<dbReference type="Gramene" id="TraesRN1D0100750400.1">
    <property type="protein sequence ID" value="TraesRN1D0100750400.1"/>
    <property type="gene ID" value="TraesRN1D0100750400"/>
</dbReference>
<dbReference type="Gramene" id="TraesRN2A0100534000.1">
    <property type="protein sequence ID" value="TraesRN2A0100534000.1"/>
    <property type="gene ID" value="TraesRN2A0100534000"/>
</dbReference>
<dbReference type="Gramene" id="TraesRN2B0100681900.1">
    <property type="protein sequence ID" value="TraesRN2B0100681900.1"/>
    <property type="gene ID" value="TraesRN2B0100681900"/>
</dbReference>
<dbReference type="Gramene" id="TraesRN2D0100666400.1">
    <property type="protein sequence ID" value="TraesRN2D0100666400.1"/>
    <property type="gene ID" value="TraesRN2D0100666400"/>
</dbReference>
<dbReference type="Gramene" id="TraesRN3B0100437300.1">
    <property type="protein sequence ID" value="TraesRN3B0100437300.1"/>
    <property type="gene ID" value="TraesRN3B0100437300"/>
</dbReference>
<dbReference type="Gramene" id="TraesRN5A0101242500.1">
    <property type="protein sequence ID" value="TraesRN5A0101242500.1"/>
    <property type="gene ID" value="TraesRN5A0101242500"/>
</dbReference>
<dbReference type="Gramene" id="TraesRN5D0100537800.1">
    <property type="protein sequence ID" value="TraesRN5D0100537800.1"/>
    <property type="gene ID" value="TraesRN5D0100537800"/>
</dbReference>
<dbReference type="Gramene" id="TraesRN6D0100806700.1">
    <property type="protein sequence ID" value="TraesRN6D0100806700.1"/>
    <property type="gene ID" value="TraesRN6D0100806700"/>
</dbReference>
<dbReference type="Gramene" id="TraesROB_scaffold_035582_01G000200.1">
    <property type="protein sequence ID" value="TraesROB_scaffold_035582_01G000200.1"/>
    <property type="gene ID" value="TraesROB_scaffold_035582_01G000200"/>
</dbReference>
<dbReference type="Gramene" id="TraesROB_scaffold_048710_01G000100.1">
    <property type="protein sequence ID" value="TraesROB_scaffold_048710_01G000100.1"/>
    <property type="gene ID" value="TraesROB_scaffold_048710_01G000100"/>
</dbReference>
<dbReference type="Gramene" id="TraesROB_scaffold_460319_01G000100.1">
    <property type="protein sequence ID" value="TraesROB_scaffold_460319_01G000100.1"/>
    <property type="gene ID" value="TraesROB_scaffold_460319_01G000100"/>
</dbReference>
<dbReference type="Gramene" id="TraesROB_scaffold_725978_01G000100.1">
    <property type="protein sequence ID" value="TraesROB_scaffold_725978_01G000100.1"/>
    <property type="gene ID" value="TraesROB_scaffold_725978_01G000100"/>
</dbReference>
<dbReference type="Gramene" id="TraesSTA1A03G00072920.1">
    <property type="protein sequence ID" value="TraesSTA1A03G00072920.1.CDS1"/>
    <property type="gene ID" value="TraesSTA1A03G00072920"/>
</dbReference>
<dbReference type="Gramene" id="TraesSTA1D03G00524570.1">
    <property type="protein sequence ID" value="TraesSTA1D03G00524570.1.CDS1"/>
    <property type="gene ID" value="TraesSTA1D03G00524570"/>
</dbReference>
<dbReference type="Gramene" id="TraesSYM1A03G00075310.1">
    <property type="protein sequence ID" value="TraesSYM1A03G00075310.1.CDS1"/>
    <property type="gene ID" value="TraesSYM1A03G00075310"/>
</dbReference>
<dbReference type="Gramene" id="TraesWEE_scaffold_019503_01G000100.1">
    <property type="protein sequence ID" value="TraesWEE_scaffold_019503_01G000100.1"/>
    <property type="gene ID" value="TraesWEE_scaffold_019503_01G000100"/>
</dbReference>
<dbReference type="Gramene" id="TraesWEE_scaffold_036006_01G000200.1">
    <property type="protein sequence ID" value="TraesWEE_scaffold_036006_01G000200.1"/>
    <property type="gene ID" value="TraesWEE_scaffold_036006_01G000200"/>
</dbReference>
<dbReference type="Gramene" id="TraesWEE_scaffold_294409_01G000300.1">
    <property type="protein sequence ID" value="TraesWEE_scaffold_294409_01G000300.1"/>
    <property type="gene ID" value="TraesWEE_scaffold_294409_01G000300"/>
</dbReference>
<dbReference type="KEGG" id="taes:803192"/>
<dbReference type="eggNOG" id="ENOG502SEUE">
    <property type="taxonomic scope" value="Eukaryota"/>
</dbReference>
<dbReference type="HOGENOM" id="CLU_211753_1_0_1"/>
<dbReference type="OrthoDB" id="77at2759"/>
<dbReference type="Proteomes" id="UP000019116">
    <property type="component" value="Chloroplast"/>
</dbReference>
<dbReference type="GO" id="GO:0009535">
    <property type="term" value="C:chloroplast thylakoid membrane"/>
    <property type="evidence" value="ECO:0007669"/>
    <property type="project" value="UniProtKB-SubCell"/>
</dbReference>
<dbReference type="GO" id="GO:0009539">
    <property type="term" value="C:photosystem II reaction center"/>
    <property type="evidence" value="ECO:0007669"/>
    <property type="project" value="InterPro"/>
</dbReference>
<dbReference type="GO" id="GO:0009055">
    <property type="term" value="F:electron transfer activity"/>
    <property type="evidence" value="ECO:0007669"/>
    <property type="project" value="UniProtKB-UniRule"/>
</dbReference>
<dbReference type="GO" id="GO:0020037">
    <property type="term" value="F:heme binding"/>
    <property type="evidence" value="ECO:0007669"/>
    <property type="project" value="InterPro"/>
</dbReference>
<dbReference type="GO" id="GO:0005506">
    <property type="term" value="F:iron ion binding"/>
    <property type="evidence" value="ECO:0007669"/>
    <property type="project" value="UniProtKB-UniRule"/>
</dbReference>
<dbReference type="GO" id="GO:0009767">
    <property type="term" value="P:photosynthetic electron transport chain"/>
    <property type="evidence" value="ECO:0007669"/>
    <property type="project" value="InterPro"/>
</dbReference>
<dbReference type="HAMAP" id="MF_00643">
    <property type="entry name" value="PSII_PsbF"/>
    <property type="match status" value="1"/>
</dbReference>
<dbReference type="InterPro" id="IPR006241">
    <property type="entry name" value="PSII_cyt_b559_bsu"/>
</dbReference>
<dbReference type="InterPro" id="IPR006216">
    <property type="entry name" value="PSII_cyt_b559_CS"/>
</dbReference>
<dbReference type="InterPro" id="IPR013081">
    <property type="entry name" value="PSII_cyt_b559_N"/>
</dbReference>
<dbReference type="NCBIfam" id="TIGR01333">
    <property type="entry name" value="cyt_b559_beta"/>
    <property type="match status" value="1"/>
</dbReference>
<dbReference type="Pfam" id="PF00283">
    <property type="entry name" value="Cytochrom_B559"/>
    <property type="match status" value="1"/>
</dbReference>
<dbReference type="PIRSF" id="PIRSF000037">
    <property type="entry name" value="PsbF"/>
    <property type="match status" value="1"/>
</dbReference>
<dbReference type="SUPFAM" id="SSF161045">
    <property type="entry name" value="Cytochrome b559 subunits"/>
    <property type="match status" value="1"/>
</dbReference>
<dbReference type="PROSITE" id="PS00537">
    <property type="entry name" value="CYTOCHROME_B559"/>
    <property type="match status" value="1"/>
</dbReference>
<organism>
    <name type="scientific">Triticum aestivum</name>
    <name type="common">Wheat</name>
    <dbReference type="NCBI Taxonomy" id="4565"/>
    <lineage>
        <taxon>Eukaryota</taxon>
        <taxon>Viridiplantae</taxon>
        <taxon>Streptophyta</taxon>
        <taxon>Embryophyta</taxon>
        <taxon>Tracheophyta</taxon>
        <taxon>Spermatophyta</taxon>
        <taxon>Magnoliopsida</taxon>
        <taxon>Liliopsida</taxon>
        <taxon>Poales</taxon>
        <taxon>Poaceae</taxon>
        <taxon>BOP clade</taxon>
        <taxon>Pooideae</taxon>
        <taxon>Triticodae</taxon>
        <taxon>Triticeae</taxon>
        <taxon>Triticinae</taxon>
        <taxon>Triticum</taxon>
    </lineage>
</organism>
<accession>P60125</accession>
<accession>P05171</accession>
<accession>P09198</accession>
<accession>Q95H58</accession>
<accession>Q9M3L1</accession>
<gene>
    <name evidence="2" type="primary">psbF</name>
</gene>
<keyword id="KW-0150">Chloroplast</keyword>
<keyword id="KW-0903">Direct protein sequencing</keyword>
<keyword id="KW-0249">Electron transport</keyword>
<keyword id="KW-0349">Heme</keyword>
<keyword id="KW-0408">Iron</keyword>
<keyword id="KW-0472">Membrane</keyword>
<keyword id="KW-0479">Metal-binding</keyword>
<keyword id="KW-0602">Photosynthesis</keyword>
<keyword id="KW-0604">Photosystem II</keyword>
<keyword id="KW-0934">Plastid</keyword>
<keyword id="KW-1185">Reference proteome</keyword>
<keyword id="KW-0691">RNA editing</keyword>
<keyword id="KW-0793">Thylakoid</keyword>
<keyword id="KW-0812">Transmembrane</keyword>
<keyword id="KW-1133">Transmembrane helix</keyword>
<keyword id="KW-0813">Transport</keyword>
<sequence length="39" mass="4498">MTIDRTYPIFTVRWLAIHGLAVPTVFFLGSISAMQFIQR</sequence>
<comment type="function">
    <text evidence="2">This b-type cytochrome is tightly associated with the reaction center of photosystem II (PSII). PSII is a light-driven water:plastoquinone oxidoreductase that uses light energy to abstract electrons from H(2)O, generating O(2) and a proton gradient subsequently used for ATP formation. It consists of a core antenna complex that captures photons, and an electron transfer chain that converts photonic excitation into a charge separation.</text>
</comment>
<comment type="cofactor">
    <cofactor evidence="2">
        <name>heme b</name>
        <dbReference type="ChEBI" id="CHEBI:60344"/>
    </cofactor>
    <text evidence="2">With its partner (PsbE) binds heme. PSII binds additional chlorophylls, carotenoids and specific lipids.</text>
</comment>
<comment type="subunit">
    <text evidence="2">Heterodimer of an alpha subunit and a beta subunit. PSII is composed of 1 copy each of membrane proteins PsbA, PsbB, PsbC, PsbD, PsbE, PsbF, PsbH, PsbI, PsbJ, PsbK, PsbL, PsbM, PsbT, PsbX, PsbY, PsbZ, Psb30/Ycf12, at least 3 peripheral proteins of the oxygen-evolving complex and a large number of cofactors. It forms dimeric complexes.</text>
</comment>
<comment type="subcellular location">
    <subcellularLocation>
        <location evidence="2">Plastid</location>
        <location evidence="2">Chloroplast thylakoid membrane</location>
        <topology evidence="2">Single-pass membrane protein</topology>
    </subcellularLocation>
</comment>
<comment type="PTM">
    <text>The N-terminus is blocked.</text>
</comment>
<comment type="RNA editing">
    <location>
        <position position="26" evidence="1"/>
    </location>
</comment>
<comment type="similarity">
    <text evidence="2">Belongs to the PsbE/PsbF family.</text>
</comment>
<geneLocation type="chloroplast"/>
<proteinExistence type="evidence at protein level"/>
<reference key="1">
    <citation type="journal article" date="1986" name="Mol. Gen. Genet.">
        <title>Location and nucleotide sequence of the gene for cytochrome b-559 in wheat chloroplast DNA.</title>
        <authorList>
            <person name="Hird S.M."/>
            <person name="Willey D.L."/>
            <person name="Dyer T.A."/>
            <person name="Gray J.C."/>
        </authorList>
    </citation>
    <scope>NUCLEOTIDE SEQUENCE [GENOMIC DNA]</scope>
</reference>
<reference key="2">
    <citation type="journal article" date="1989" name="Plant Mol. Biol.">
        <title>A photosystem II polypeptide is encoded by an open reading frame co-transcribed with genes for cytochrome b-559 in wheat chloroplast DNA.</title>
        <authorList>
            <person name="Webber A.N."/>
            <person name="Hird S.M."/>
            <person name="Packman L.C."/>
            <person name="Dyer T.A."/>
            <person name="Gray J.C."/>
        </authorList>
    </citation>
    <scope>NUCLEOTIDE SEQUENCE [GENOMIC DNA]</scope>
    <source>
        <strain>cv. Sentry</strain>
        <tissue>Leaf</tissue>
    </source>
</reference>
<reference key="3">
    <citation type="journal article" date="2000" name="Plant Mol. Biol. Rep.">
        <title>Chinese spring wheat (Triticum aestivum L.) chloroplast genome: complete sequence and contig clones.</title>
        <authorList>
            <person name="Ogihara Y."/>
            <person name="Isono K."/>
            <person name="Kojima T."/>
            <person name="Endo A."/>
            <person name="Hanaoka M."/>
            <person name="Shiina T."/>
            <person name="Terachi T."/>
            <person name="Utsugi S."/>
            <person name="Murata M."/>
            <person name="Mori N."/>
            <person name="Takumi S."/>
            <person name="Ikeo K."/>
            <person name="Gojobori T."/>
            <person name="Murai R."/>
            <person name="Murai K."/>
            <person name="Matsuoka Y."/>
            <person name="Ohnishi Y."/>
            <person name="Tajiri H."/>
            <person name="Tsunewaki K."/>
        </authorList>
    </citation>
    <scope>NUCLEOTIDE SEQUENCE [LARGE SCALE GENOMIC DNA]</scope>
    <source>
        <strain>cv. Chinese Spring</strain>
    </source>
</reference>
<reference key="4">
    <citation type="journal article" date="1989" name="FEBS Lett.">
        <title>N-terminal sequencing of photosystem II low-molecular-mass proteins. 5 and 4.1 kDa components of the O2-evolving core complex from higher plants.</title>
        <authorList>
            <person name="Ikeuchi M."/>
            <person name="Takio K."/>
            <person name="Inoue Y."/>
        </authorList>
    </citation>
    <scope>PROTEIN SEQUENCE OF 2-11</scope>
    <scope>BLOCKAGE OF N-TERMINUS</scope>
</reference>